<proteinExistence type="evidence at protein level"/>
<keyword id="KW-0007">Acetylation</keyword>
<keyword id="KW-0025">Alternative splicing</keyword>
<keyword id="KW-0217">Developmental protein</keyword>
<keyword id="KW-0238">DNA-binding</keyword>
<keyword id="KW-1017">Isopeptide bond</keyword>
<keyword id="KW-0479">Metal-binding</keyword>
<keyword id="KW-0488">Methylation</keyword>
<keyword id="KW-0539">Nucleus</keyword>
<keyword id="KW-0597">Phosphoprotein</keyword>
<keyword id="KW-1267">Proteomics identification</keyword>
<keyword id="KW-1185">Reference proteome</keyword>
<keyword id="KW-0677">Repeat</keyword>
<keyword id="KW-0678">Repressor</keyword>
<keyword id="KW-0804">Transcription</keyword>
<keyword id="KW-0805">Transcription regulation</keyword>
<keyword id="KW-0043">Tumor suppressor</keyword>
<keyword id="KW-0832">Ubl conjugation</keyword>
<keyword id="KW-0879">Wnt signaling pathway</keyword>
<keyword id="KW-0862">Zinc</keyword>
<keyword id="KW-0863">Zinc-finger</keyword>
<sequence>MTFPEADILLKSGECAGQTMLDTMEAPGHSRQLLLQLNNQRTKGFLCDVIIVVQNALFRAHKNVLAASSAYLKSLVVHDNLLNLDHDMVSPAVFRLVLDFIYTGRLADGAEAAAAAAVAPGAEPSLGAVLAAASYLQIPDLVALCKKRLKRHGKYCHLRGGGGGGGGYAPYGRPGRGLRAATPVIQACYPSPVGPPPPPAAEPPSGPEAAVNTHCAELYASGPGPAAALCASERRCSPLCGLDLSKKSPPGSAAPERPLAERELPPRPDSPPSAGPAAYKEPPLALPSLPPLPFQKLEEAAPPSDPFRGGSGSPGPEPPGRPDGPSLLYRWMKHEPGLGSYGDELGRERGSPSERCEERGGDAAVSPGGPPLGLAPPPRYPGSLDGPGAGGDGDDYKSSSEETGSSEDPSPPGGHLEGYPCPHLAYGEPESFGDNLYVCIPCGKGFPSSEQLNAHVEAHVEEEEALYGRAEAAEVAAGAAGLGPPFGGGGDKVAGAPGGLGELLRPYRCASCDKSYKDPATLRQHEKTHWLTRPYPCTICGKKFTQRGTMTRHMRSHLGLKPFACDACGMRFTRQYRLTEHMRIHSGEKPYECQVCGGKFAQQRNLISHMKMHAVGGAAGAAGALAGLGGLPGVPGPDGKGKLDFPEGVFAVARLTAEQLSLKQQDKAAAAELLAQTTHFLHDPKVALESLYPLAKFTAELGLSPDKAAEVLSQGAHLAAGPDGRTIDRFSPT</sequence>
<protein>
    <recommendedName>
        <fullName>Hypermethylated in cancer 1 protein</fullName>
        <shortName>Hic-1</shortName>
    </recommendedName>
    <alternativeName>
        <fullName>Zinc finger and BTB domain-containing protein 29</fullName>
    </alternativeName>
</protein>
<comment type="function">
    <text evidence="1 7 8 9 10 11 14 15 16 17 18">Transcriptional repressor (PubMed:12052894, PubMed:15231840). Recognizes and binds to the consensus sequence '5-[CG]NG[CG]GGGCA[CA]CC-3' (PubMed:15231840). May act as a tumor suppressor (PubMed:20154726). Involved in development of head, face, limbs and ventral body wall (By similarity). Involved in down-regulation of SIRT1 and thereby is involved in regulation of p53/TP53-dependent apoptotic DNA-damage responses (PubMed:16269335). The specific target gene promoter association seems to be depend on corepressors, such as CTBP1 or CTBP2 and MTA1 (PubMed:12052894, PubMed:20547755). In cooperation with MTA1 (indicative for an association with the NuRD complex) represses transcription from CCND1/cyclin-D1 and CDKN1C/p57Kip2 specifically in quiescent cells (PubMed:20547755). Involved in regulation of the Wnt signaling pathway probably by association with TCF7L2 and preventing TCF7L2 and CTNNB1 association with promoters of TCF-responsive genes (PubMed:16724116). Seems to repress transcription from E2F1 and ATOH1 which involves ARID1A, indicative for the participation of a distinct SWI/SNF-type chromatin-remodeling complex (PubMed:18347096, PubMed:19486893). Probably represses transcription of ACKR3, FGFBP1 and EFNA1 (PubMed:16690027, PubMed:19525223, PubMed:20154726).</text>
</comment>
<comment type="subunit">
    <text evidence="1 5 6 7 11 12 15 18">Self-associates (PubMed:10611298, PubMed:12052894). Interacts with HIC2 (PubMed:11554746). Interacts with CTBP1 and CTBP2 (PubMed:12052894, PubMed:16762039). Interacts with TCF7L2 and ARID1A (PubMed:16724116, PubMed:19486893). Interacts with MTA1 and MBD3; indicative for an association with the NuRD complex (PubMed:20547755). Interacts with SIRT1 (By similarity).</text>
</comment>
<comment type="interaction">
    <interactant intactId="EBI-2507362">
        <id>Q14526</id>
    </interactant>
    <interactant intactId="EBI-637887">
        <id>O14497</id>
        <label>ARID1A</label>
    </interactant>
    <organismsDiffer>false</organismsDiffer>
    <experiments>2</experiments>
</comment>
<comment type="interaction">
    <interactant intactId="EBI-2507362">
        <id>Q14526</id>
    </interactant>
    <interactant intactId="EBI-908846">
        <id>Q13363</id>
        <label>CTBP1</label>
    </interactant>
    <organismsDiffer>false</organismsDiffer>
    <experiments>2</experiments>
</comment>
<comment type="interaction">
    <interactant intactId="EBI-2507362">
        <id>Q14526</id>
    </interactant>
    <interactant intactId="EBI-741533">
        <id>P56545</id>
        <label>CTBP2</label>
    </interactant>
    <organismsDiffer>false</organismsDiffer>
    <experiments>2</experiments>
</comment>
<comment type="interaction">
    <interactant intactId="EBI-2507362">
        <id>Q14526</id>
    </interactant>
    <interactant intactId="EBI-924724">
        <id>Q9NQB0</id>
        <label>TCF7L2</label>
    </interactant>
    <organismsDiffer>false</organismsDiffer>
    <experiments>6</experiments>
</comment>
<comment type="interaction">
    <interactant intactId="EBI-2507362">
        <id>Q14526</id>
    </interactant>
    <interactant intactId="EBI-604547">
        <id>O88712</id>
        <label>Ctbp1</label>
    </interactant>
    <organismsDiffer>true</organismsDiffer>
    <experiments>10</experiments>
</comment>
<comment type="interaction">
    <interactant intactId="EBI-2507362">
        <id>Q14526</id>
    </interactant>
    <interactant intactId="EBI-1384883">
        <id>P56546</id>
        <label>Ctbp2</label>
    </interactant>
    <organismsDiffer>true</organismsDiffer>
    <experiments>2</experiments>
</comment>
<comment type="subcellular location">
    <subcellularLocation>
        <location evidence="6">Nucleus</location>
    </subcellularLocation>
</comment>
<comment type="alternative products">
    <event type="alternative splicing"/>
    <isoform>
        <id>Q14526-1</id>
        <name>1</name>
        <sequence type="displayed"/>
    </isoform>
    <isoform>
        <id>Q14526-2</id>
        <name>2</name>
        <sequence type="described" ref="VSP_006826"/>
    </isoform>
    <text>Additional isoforms seem to exist.</text>
</comment>
<comment type="tissue specificity">
    <text>Ubiquitously expressed with highest levels found in lung, colon, prostate, thymus, testis and ovary. Expression is absent or decreased in many tumor cells.</text>
</comment>
<comment type="domain">
    <text>The BTB domain inhibits the binding to a single consensus binding site, but mediates cooperative binding to multiple binding sites.</text>
</comment>
<comment type="PTM">
    <text evidence="13">Acetylated on several residues, including Lys-333. Lys-333 is deacetylated by SIRT1.</text>
</comment>
<comment type="PTM">
    <text evidence="13">Sumoylated on Lys-333 by a PIAS family member, which enhances interaction with MTA1, positively regulates transcriptional repression activity and is enhanced by HDAC4.</text>
</comment>
<comment type="miscellaneous">
    <text>The HIC1 gene is frequently found epigenetically silenced or deleted in different types of solid tumors.</text>
</comment>
<comment type="similarity">
    <text evidence="20">Belongs to the krueppel C2H2-type zinc-finger protein family. Hic subfamily.</text>
</comment>
<comment type="online information" name="Atlas of Genetics and Cytogenetics in Oncology and Haematology">
    <link uri="https://atlasgeneticsoncology.org/gene/40819/HIC1"/>
</comment>
<organism>
    <name type="scientific">Homo sapiens</name>
    <name type="common">Human</name>
    <dbReference type="NCBI Taxonomy" id="9606"/>
    <lineage>
        <taxon>Eukaryota</taxon>
        <taxon>Metazoa</taxon>
        <taxon>Chordata</taxon>
        <taxon>Craniata</taxon>
        <taxon>Vertebrata</taxon>
        <taxon>Euteleostomi</taxon>
        <taxon>Mammalia</taxon>
        <taxon>Eutheria</taxon>
        <taxon>Euarchontoglires</taxon>
        <taxon>Primates</taxon>
        <taxon>Haplorrhini</taxon>
        <taxon>Catarrhini</taxon>
        <taxon>Hominidae</taxon>
        <taxon>Homo</taxon>
    </lineage>
</organism>
<feature type="chain" id="PRO_0000046942" description="Hypermethylated in cancer 1 protein">
    <location>
        <begin position="1"/>
        <end position="733"/>
    </location>
</feature>
<feature type="domain" description="BTB" evidence="2">
    <location>
        <begin position="47"/>
        <end position="110"/>
    </location>
</feature>
<feature type="zinc finger region" description="C2H2-type 1" evidence="3">
    <location>
        <begin position="439"/>
        <end position="459"/>
    </location>
</feature>
<feature type="zinc finger region" description="C2H2-type 2" evidence="3">
    <location>
        <begin position="509"/>
        <end position="529"/>
    </location>
</feature>
<feature type="zinc finger region" description="C2H2-type 3" evidence="3">
    <location>
        <begin position="537"/>
        <end position="557"/>
    </location>
</feature>
<feature type="zinc finger region" description="C2H2-type 4" evidence="3">
    <location>
        <begin position="565"/>
        <end position="585"/>
    </location>
</feature>
<feature type="zinc finger region" description="C2H2-type 5" evidence="3">
    <location>
        <begin position="593"/>
        <end position="613"/>
    </location>
</feature>
<feature type="region of interest" description="Mediates HDAC-dependent transcriptional repression">
    <location>
        <begin position="154"/>
        <end position="315"/>
    </location>
</feature>
<feature type="region of interest" description="Disordered" evidence="4">
    <location>
        <begin position="189"/>
        <end position="209"/>
    </location>
</feature>
<feature type="region of interest" description="Disordered" evidence="4">
    <location>
        <begin position="241"/>
        <end position="421"/>
    </location>
</feature>
<feature type="region of interest" description="Interaction with CTBP1">
    <location>
        <begin position="241"/>
        <end position="247"/>
    </location>
</feature>
<feature type="compositionally biased region" description="Pro residues" evidence="4">
    <location>
        <begin position="192"/>
        <end position="206"/>
    </location>
</feature>
<feature type="compositionally biased region" description="Pro residues" evidence="4">
    <location>
        <begin position="284"/>
        <end position="293"/>
    </location>
</feature>
<feature type="compositionally biased region" description="Basic and acidic residues" evidence="4">
    <location>
        <begin position="344"/>
        <end position="361"/>
    </location>
</feature>
<feature type="compositionally biased region" description="Pro residues" evidence="4">
    <location>
        <begin position="368"/>
        <end position="380"/>
    </location>
</feature>
<feature type="modified residue" description="Omega-N-methylarginine" evidence="1">
    <location>
        <position position="159"/>
    </location>
</feature>
<feature type="modified residue" description="Phosphoserine" evidence="21">
    <location>
        <position position="237"/>
    </location>
</feature>
<feature type="modified residue" description="Phosphoserine" evidence="21">
    <location>
        <position position="248"/>
    </location>
</feature>
<feature type="modified residue" description="N6-acetyllysine; alternate" evidence="13">
    <location>
        <position position="333"/>
    </location>
</feature>
<feature type="modified residue" description="Phosphoserine" evidence="21">
    <location>
        <position position="366"/>
    </location>
</feature>
<feature type="modified residue" description="Phosphoserine" evidence="1">
    <location>
        <position position="704"/>
    </location>
</feature>
<feature type="cross-link" description="Glycyl lysine isopeptide (Lys-Gly) (interchain with G-Cter in SUMO); alternate">
    <location>
        <position position="333"/>
    </location>
</feature>
<feature type="splice variant" id="VSP_006826" description="In isoform 2." evidence="20">
    <location>
        <begin position="1"/>
        <end position="19"/>
    </location>
</feature>
<feature type="sequence variant" id="VAR_063109" description="In dbSNP:rs1063317." evidence="19">
    <original>R</original>
    <variation>G</variation>
    <location>
        <position position="725"/>
    </location>
</feature>
<feature type="mutagenesis site" description="Abolishes interaction with CTBP1 and CTBP2. Impairs transcriptional repression." evidence="12">
    <original>L</original>
    <variation>A</variation>
    <location>
        <position position="244"/>
    </location>
</feature>
<feature type="mutagenesis site" description="Mimicks acetylation. Impairs interaction with RBBP4 and MTA1 and no effect on interaction with CTBP2. Reduces transcriptional repression." evidence="13 18">
    <original>K</original>
    <variation>Q</variation>
    <location>
        <position position="333"/>
    </location>
</feature>
<feature type="mutagenesis site" description="Abolishes sumoylation; impairs transcriptional repression activity." evidence="13 18">
    <original>K</original>
    <variation>R</variation>
    <location>
        <position position="333"/>
    </location>
</feature>
<feature type="mutagenesis site" description="Impairs transcriptional repression activity. Decreases interaction with MTA1." evidence="13 18">
    <original>E</original>
    <variation>A</variation>
    <location>
        <position position="335"/>
    </location>
</feature>
<feature type="mutagenesis site" description="Impairs K-333 acetylation; no effect on sumoylation. Decreases interaction with MTA1." evidence="13 18">
    <original>P</original>
    <variation>A</variation>
    <location>
        <position position="336"/>
    </location>
</feature>
<feature type="mutagenesis site" description="Abolishes repression activity." evidence="8">
    <original>C</original>
    <variation>S</variation>
    <location>
        <position position="540"/>
    </location>
</feature>
<feature type="sequence conflict" description="In Ref. 1; AAD09201." evidence="20" ref="1">
    <original>P</original>
    <variation>R</variation>
    <location>
        <position position="190"/>
    </location>
</feature>
<evidence type="ECO:0000250" key="1">
    <source>
        <dbReference type="UniProtKB" id="Q9R1Y5"/>
    </source>
</evidence>
<evidence type="ECO:0000255" key="2">
    <source>
        <dbReference type="PROSITE-ProRule" id="PRU00037"/>
    </source>
</evidence>
<evidence type="ECO:0000255" key="3">
    <source>
        <dbReference type="PROSITE-ProRule" id="PRU00042"/>
    </source>
</evidence>
<evidence type="ECO:0000256" key="4">
    <source>
        <dbReference type="SAM" id="MobiDB-lite"/>
    </source>
</evidence>
<evidence type="ECO:0000269" key="5">
    <source>
    </source>
</evidence>
<evidence type="ECO:0000269" key="6">
    <source>
    </source>
</evidence>
<evidence type="ECO:0000269" key="7">
    <source>
    </source>
</evidence>
<evidence type="ECO:0000269" key="8">
    <source>
    </source>
</evidence>
<evidence type="ECO:0000269" key="9">
    <source>
    </source>
</evidence>
<evidence type="ECO:0000269" key="10">
    <source>
    </source>
</evidence>
<evidence type="ECO:0000269" key="11">
    <source>
    </source>
</evidence>
<evidence type="ECO:0000269" key="12">
    <source>
    </source>
</evidence>
<evidence type="ECO:0000269" key="13">
    <source>
    </source>
</evidence>
<evidence type="ECO:0000269" key="14">
    <source>
    </source>
</evidence>
<evidence type="ECO:0000269" key="15">
    <source>
    </source>
</evidence>
<evidence type="ECO:0000269" key="16">
    <source>
    </source>
</evidence>
<evidence type="ECO:0000269" key="17">
    <source>
    </source>
</evidence>
<evidence type="ECO:0000269" key="18">
    <source>
    </source>
</evidence>
<evidence type="ECO:0000269" key="19">
    <source>
    </source>
</evidence>
<evidence type="ECO:0000305" key="20"/>
<evidence type="ECO:0007744" key="21">
    <source>
    </source>
</evidence>
<accession>Q14526</accession>
<accession>D3DTI4</accession>
<gene>
    <name type="primary">HIC1</name>
    <name type="synonym">ZBTB29</name>
</gene>
<reference key="1">
    <citation type="journal article" date="1995" name="Nat. Med.">
        <title>p53 activates expression of HIC-1, a new candidate tumour suppressor gene on 17p13.3.</title>
        <authorList>
            <person name="Wales M.M."/>
            <person name="Biel M.A."/>
            <person name="el Deiry W."/>
            <person name="Nelkin B.D."/>
            <person name="Issa J.-P."/>
            <person name="Cavenee W.K."/>
            <person name="Kuerbitz S.J."/>
            <person name="Baylin S.B."/>
        </authorList>
    </citation>
    <scope>NUCLEOTIDE SEQUENCE [GENOMIC DNA] (ISOFORM 2)</scope>
    <scope>VARIANT GLY-725</scope>
</reference>
<reference key="2">
    <citation type="journal article" date="2006" name="Nature">
        <title>DNA sequence of human chromosome 17 and analysis of rearrangement in the human lineage.</title>
        <authorList>
            <person name="Zody M.C."/>
            <person name="Garber M."/>
            <person name="Adams D.J."/>
            <person name="Sharpe T."/>
            <person name="Harrow J."/>
            <person name="Lupski J.R."/>
            <person name="Nicholson C."/>
            <person name="Searle S.M."/>
            <person name="Wilming L."/>
            <person name="Young S.K."/>
            <person name="Abouelleil A."/>
            <person name="Allen N.R."/>
            <person name="Bi W."/>
            <person name="Bloom T."/>
            <person name="Borowsky M.L."/>
            <person name="Bugalter B.E."/>
            <person name="Butler J."/>
            <person name="Chang J.L."/>
            <person name="Chen C.-K."/>
            <person name="Cook A."/>
            <person name="Corum B."/>
            <person name="Cuomo C.A."/>
            <person name="de Jong P.J."/>
            <person name="DeCaprio D."/>
            <person name="Dewar K."/>
            <person name="FitzGerald M."/>
            <person name="Gilbert J."/>
            <person name="Gibson R."/>
            <person name="Gnerre S."/>
            <person name="Goldstein S."/>
            <person name="Grafham D.V."/>
            <person name="Grocock R."/>
            <person name="Hafez N."/>
            <person name="Hagopian D.S."/>
            <person name="Hart E."/>
            <person name="Norman C.H."/>
            <person name="Humphray S."/>
            <person name="Jaffe D.B."/>
            <person name="Jones M."/>
            <person name="Kamal M."/>
            <person name="Khodiyar V.K."/>
            <person name="LaButti K."/>
            <person name="Laird G."/>
            <person name="Lehoczky J."/>
            <person name="Liu X."/>
            <person name="Lokyitsang T."/>
            <person name="Loveland J."/>
            <person name="Lui A."/>
            <person name="Macdonald P."/>
            <person name="Major J.E."/>
            <person name="Matthews L."/>
            <person name="Mauceli E."/>
            <person name="McCarroll S.A."/>
            <person name="Mihalev A.H."/>
            <person name="Mudge J."/>
            <person name="Nguyen C."/>
            <person name="Nicol R."/>
            <person name="O'Leary S.B."/>
            <person name="Osoegawa K."/>
            <person name="Schwartz D.C."/>
            <person name="Shaw-Smith C."/>
            <person name="Stankiewicz P."/>
            <person name="Steward C."/>
            <person name="Swarbreck D."/>
            <person name="Venkataraman V."/>
            <person name="Whittaker C.A."/>
            <person name="Yang X."/>
            <person name="Zimmer A.R."/>
            <person name="Bradley A."/>
            <person name="Hubbard T."/>
            <person name="Birren B.W."/>
            <person name="Rogers J."/>
            <person name="Lander E.S."/>
            <person name="Nusbaum C."/>
        </authorList>
    </citation>
    <scope>NUCLEOTIDE SEQUENCE [LARGE SCALE GENOMIC DNA]</scope>
</reference>
<reference key="3">
    <citation type="submission" date="2005-09" db="EMBL/GenBank/DDBJ databases">
        <authorList>
            <person name="Mural R.J."/>
            <person name="Istrail S."/>
            <person name="Sutton G.G."/>
            <person name="Florea L."/>
            <person name="Halpern A.L."/>
            <person name="Mobarry C.M."/>
            <person name="Lippert R."/>
            <person name="Walenz B."/>
            <person name="Shatkay H."/>
            <person name="Dew I."/>
            <person name="Miller J.R."/>
            <person name="Flanigan M.J."/>
            <person name="Edwards N.J."/>
            <person name="Bolanos R."/>
            <person name="Fasulo D."/>
            <person name="Halldorsson B.V."/>
            <person name="Hannenhalli S."/>
            <person name="Turner R."/>
            <person name="Yooseph S."/>
            <person name="Lu F."/>
            <person name="Nusskern D.R."/>
            <person name="Shue B.C."/>
            <person name="Zheng X.H."/>
            <person name="Zhong F."/>
            <person name="Delcher A.L."/>
            <person name="Huson D.H."/>
            <person name="Kravitz S.A."/>
            <person name="Mouchard L."/>
            <person name="Reinert K."/>
            <person name="Remington K.A."/>
            <person name="Clark A.G."/>
            <person name="Waterman M.S."/>
            <person name="Eichler E.E."/>
            <person name="Adams M.D."/>
            <person name="Hunkapiller M.W."/>
            <person name="Myers E.W."/>
            <person name="Venter J.C."/>
        </authorList>
    </citation>
    <scope>NUCLEOTIDE SEQUENCE [LARGE SCALE GENOMIC DNA]</scope>
</reference>
<reference key="4">
    <citation type="journal article" date="1999" name="Proc. Natl. Acad. Sci. U.S.A.">
        <title>Recruitment of SMRT/N-CoR-mSin3A-HDAC-repressing complexes is not a general mechanism for BTB/POZ transcriptional repressors: the case of HIC-1 and gammaFBP-B.</title>
        <authorList>
            <person name="Deltour S."/>
            <person name="Guerardel C."/>
            <person name="Leprince D."/>
        </authorList>
    </citation>
    <scope>SELF-ASSOCIATION</scope>
</reference>
<reference key="5">
    <citation type="journal article" date="2001" name="Biochem. Biophys. Res. Commun.">
        <title>Characterization of HRG22, a human homologue of the putative tumor suppressor gene HIC1.</title>
        <authorList>
            <person name="Deltour S."/>
            <person name="Pinte S."/>
            <person name="Guerardel C."/>
            <person name="Leprince D."/>
        </authorList>
    </citation>
    <scope>ALTERNATIVE SPLICING</scope>
    <scope>INTERACTION WITH HIC2</scope>
    <scope>SUBCELLULAR LOCATION</scope>
</reference>
<reference key="6">
    <citation type="journal article" date="2002" name="Mol. Cell. Biol.">
        <title>The human candidate tumor suppressor gene HIC1 recruits CtBP through a degenerate GLDLSKK motif.</title>
        <authorList>
            <person name="Deltour S."/>
            <person name="Pinte S."/>
            <person name="Guerardel C."/>
            <person name="Wasylyk B."/>
            <person name="Leprince D."/>
        </authorList>
    </citation>
    <scope>FUNCTION</scope>
    <scope>SELF-ASSOCIATION</scope>
    <scope>INTERACTION WITH CTBP1</scope>
</reference>
<reference key="7">
    <citation type="journal article" date="2004" name="J. Biol. Chem.">
        <title>The tumor suppressor gene HIC1 (hypermethylated in cancer 1) is a sequence-specific transcriptional repressor: definition of its consensus binding sequence and analysis of its DNA binding and repressive properties.</title>
        <authorList>
            <person name="Pinte S."/>
            <person name="Stankovic-Valentin N."/>
            <person name="Deltour S."/>
            <person name="Rood B.R."/>
            <person name="Guerardel C."/>
            <person name="Leprince D."/>
        </authorList>
    </citation>
    <scope>FUNCTION</scope>
    <scope>DNA-BINDING</scope>
    <scope>MUTAGENESIS OF CYS-540</scope>
</reference>
<reference key="8">
    <citation type="journal article" date="2005" name="Cell">
        <title>Tumor suppressor HIC1 directly regulates SIRT1 to modulate p53-dependent DNA-damage responses.</title>
        <authorList>
            <person name="Chen W.Y."/>
            <person name="Wang D.H."/>
            <person name="Yen R.C."/>
            <person name="Luo J."/>
            <person name="Gu W."/>
            <person name="Baylin S.B."/>
        </authorList>
    </citation>
    <scope>FUNCTION</scope>
</reference>
<reference key="9">
    <citation type="journal article" date="2006" name="Biochem. Biophys. Res. Commun.">
        <title>Mechanism of fibroblast growth factor-binding protein 1 repression by TGF-beta.</title>
        <authorList>
            <person name="Briones V.R."/>
            <person name="Chen S."/>
            <person name="Riegel A.T."/>
            <person name="Lechleider R.J."/>
        </authorList>
    </citation>
    <scope>FUNCTION</scope>
</reference>
<reference key="10">
    <citation type="journal article" date="2006" name="EMBO J.">
        <title>HIC1 attenuates Wnt signaling by recruitment of TCF-4 and beta-catenin to the nuclear bodies.</title>
        <authorList>
            <person name="Valenta T."/>
            <person name="Lukas J."/>
            <person name="Doubravska L."/>
            <person name="Fafilek B."/>
            <person name="Korinek V."/>
        </authorList>
    </citation>
    <scope>FUNCTION IN WNT SIGNALING</scope>
    <scope>INTERACTION WITH TCF7L2</scope>
</reference>
<reference key="11">
    <citation type="journal article" date="2006" name="FEBS J.">
        <title>A L225A substitution in the human tumour suppressor HIC1 abolishes its interaction with the corepressor CtBP.</title>
        <authorList>
            <person name="Stankovic-Valentin N."/>
            <person name="Verger A."/>
            <person name="Deltour-Balerdi S."/>
            <person name="Quinlan K.G."/>
            <person name="Crossley M."/>
            <person name="Leprince D."/>
        </authorList>
    </citation>
    <scope>INTERACTION WITH CTBP1 AND CTBP2</scope>
    <scope>MUTAGENESIS OF LEU-244</scope>
</reference>
<reference key="12">
    <citation type="journal article" date="2007" name="Mol. Cell. Biol.">
        <title>An acetylation/deacetylation-SUMOylation switch through a phylogenetically conserved psiKXEP motif in the tumor suppressor HIC1 regulates transcriptional repression activity.</title>
        <authorList>
            <person name="Stankovic-Valentin N."/>
            <person name="Deltour S."/>
            <person name="Seeler J."/>
            <person name="Pinte S."/>
            <person name="Vergoten G."/>
            <person name="Guerardel C."/>
            <person name="Dejean A."/>
            <person name="Leprince D."/>
        </authorList>
    </citation>
    <scope>SUMOYLATION AT LYS-333</scope>
    <scope>ACETYLATION AT LYS-333</scope>
    <scope>MUTAGENESIS OF LYS-333; GLU-335 AND PRO-336</scope>
</reference>
<reference key="13">
    <citation type="journal article" date="2007" name="Proc. Natl. Acad. Sci. U.S.A.">
        <title>Metabolic regulation of SIRT1 transcription via a HIC1:CtBP corepressor complex.</title>
        <authorList>
            <person name="Zhang Q."/>
            <person name="Wang S.Y."/>
            <person name="Fleuriel C."/>
            <person name="Leprince D."/>
            <person name="Rocheleau J.V."/>
            <person name="Piston D.W."/>
            <person name="Goodman R.H."/>
        </authorList>
    </citation>
    <scope>RETRACTED PAPER</scope>
</reference>
<reference key="14">
    <citation type="journal article" date="2015" name="Proc. Natl. Acad. Sci. U.S.A.">
        <authorList>
            <person name="Zhang Q."/>
            <person name="Wang S.Y."/>
            <person name="Fleuriel C."/>
            <person name="Dominique L."/>
            <person name="Rocheleau J.V."/>
            <person name="Piston D.W."/>
            <person name="Goodman R.H."/>
        </authorList>
    </citation>
    <scope>RETRACTION NOTICE OF PUBMED:17213307</scope>
</reference>
<reference key="15">
    <citation type="journal article" date="2008" name="Genes Dev.">
        <title>Cooperation between the Hic1 and Ptch1 tumor suppressors in medulloblastoma.</title>
        <authorList>
            <person name="Briggs K.J."/>
            <person name="Corcoran-Schwartz I.M."/>
            <person name="Zhang W."/>
            <person name="Harcke T."/>
            <person name="Devereux W.L."/>
            <person name="Baylin S.B."/>
            <person name="Eberhart C.G."/>
            <person name="Watkins D.N."/>
        </authorList>
    </citation>
    <scope>FUNCTION</scope>
</reference>
<reference key="16">
    <citation type="journal article" date="2008" name="Genes Dev.">
        <authorList>
            <person name="Briggs K.J."/>
            <person name="Corcoran-Schwartz I.M."/>
            <person name="Zhang W."/>
            <person name="Harcke T."/>
            <person name="Devereux W.L."/>
            <person name="Baylin S.B."/>
            <person name="Eberhart C.G."/>
            <person name="Watkins D.N."/>
        </authorList>
    </citation>
    <scope>ERRATUM OF PUBMED:18347096</scope>
</reference>
<reference key="17">
    <citation type="journal article" date="2009" name="Biochem. Biophys. Res. Commun.">
        <title>HIC1 interacts with a specific subunit of SWI/SNF complexes, ARID1A/BAF250A.</title>
        <authorList>
            <person name="Van Rechem C."/>
            <person name="Boulay G."/>
            <person name="Leprince D."/>
        </authorList>
    </citation>
    <scope>FUNCTION</scope>
    <scope>INTERACTION WITH ARID1A</scope>
</reference>
<reference key="18">
    <citation type="journal article" date="2009" name="J. Biol. Chem.">
        <title>Scavenger chemokine (CXC motif) receptor 7 (CXCR7) is a direct target gene of HIC1 (hypermethylated in cancer 1).</title>
        <authorList>
            <person name="Van Rechem C."/>
            <person name="Rood B.R."/>
            <person name="Touka M."/>
            <person name="Pinte S."/>
            <person name="Jenal M."/>
            <person name="Guerardel C."/>
            <person name="Ramsey K."/>
            <person name="Monte D."/>
            <person name="Begue A."/>
            <person name="Tschan M.P."/>
            <person name="Stephan D.A."/>
            <person name="Leprince D."/>
        </authorList>
    </citation>
    <scope>FUNCTION</scope>
</reference>
<reference key="19">
    <citation type="journal article" date="2010" name="Mol. Cell. Biol.">
        <title>Differential regulation of HIC1 target genes by CtBP and NuRD, via an acetylation/SUMOylation switch, in quiescent versus proliferating cells.</title>
        <authorList>
            <person name="Van Rechem C."/>
            <person name="Boulay G."/>
            <person name="Pinte S."/>
            <person name="Stankovic-Valentin N."/>
            <person name="Guerardel C."/>
            <person name="Leprince D."/>
        </authorList>
    </citation>
    <scope>FUNCTION</scope>
    <scope>INTERACTION WITH MTA1 AND MBD3</scope>
    <scope>MUTAGENESIS OF LYS-333; GLU-335 AND PRO-336</scope>
</reference>
<reference key="20">
    <citation type="journal article" date="2010" name="Oncogene">
        <title>A potential tumor suppressor role for Hic1 in breast cancer through transcriptional repression of ephrin-A1.</title>
        <authorList>
            <person name="Zhang W."/>
            <person name="Zeng X."/>
            <person name="Briggs K.J."/>
            <person name="Beaty R."/>
            <person name="Simons B."/>
            <person name="Chiu Yen R.W."/>
            <person name="Tyler M.A."/>
            <person name="Tsai H.C."/>
            <person name="Ye Y."/>
            <person name="Gesell G.S."/>
            <person name="Herman J.G."/>
            <person name="Baylin S.B."/>
            <person name="Watkins D.N."/>
        </authorList>
    </citation>
    <scope>FUNCTION</scope>
</reference>
<reference key="21">
    <citation type="journal article" date="2014" name="J. Proteomics">
        <title>An enzyme assisted RP-RPLC approach for in-depth analysis of human liver phosphoproteome.</title>
        <authorList>
            <person name="Bian Y."/>
            <person name="Song C."/>
            <person name="Cheng K."/>
            <person name="Dong M."/>
            <person name="Wang F."/>
            <person name="Huang J."/>
            <person name="Sun D."/>
            <person name="Wang L."/>
            <person name="Ye M."/>
            <person name="Zou H."/>
        </authorList>
    </citation>
    <scope>PHOSPHORYLATION [LARGE SCALE ANALYSIS] AT SER-237; SER-248 AND SER-366</scope>
    <scope>IDENTIFICATION BY MASS SPECTROMETRY [LARGE SCALE ANALYSIS]</scope>
    <source>
        <tissue>Liver</tissue>
    </source>
</reference>
<name>HIC1_HUMAN</name>
<dbReference type="EMBL" id="L41919">
    <property type="protein sequence ID" value="AAD09201.1"/>
    <property type="molecule type" value="Genomic_DNA"/>
</dbReference>
<dbReference type="EMBL" id="AC090617">
    <property type="status" value="NOT_ANNOTATED_CDS"/>
    <property type="molecule type" value="Genomic_DNA"/>
</dbReference>
<dbReference type="EMBL" id="CH471108">
    <property type="protein sequence ID" value="EAW90562.1"/>
    <property type="molecule type" value="Genomic_DNA"/>
</dbReference>
<dbReference type="EMBL" id="CH471108">
    <property type="protein sequence ID" value="EAW90563.1"/>
    <property type="molecule type" value="Genomic_DNA"/>
</dbReference>
<dbReference type="CCDS" id="CCDS42229.1">
    <molecule id="Q14526-1"/>
</dbReference>
<dbReference type="CCDS" id="CCDS42230.1">
    <molecule id="Q14526-2"/>
</dbReference>
<dbReference type="RefSeq" id="NP_001091672.1">
    <molecule id="Q14526-1"/>
    <property type="nucleotide sequence ID" value="NM_001098202.1"/>
</dbReference>
<dbReference type="RefSeq" id="NP_006488.2">
    <molecule id="Q14526-2"/>
    <property type="nucleotide sequence ID" value="NM_006497.4"/>
</dbReference>
<dbReference type="SMR" id="Q14526"/>
<dbReference type="BioGRID" id="109337">
    <property type="interactions" value="38"/>
</dbReference>
<dbReference type="CORUM" id="Q14526"/>
<dbReference type="ELM" id="Q14526"/>
<dbReference type="FunCoup" id="Q14526">
    <property type="interactions" value="1178"/>
</dbReference>
<dbReference type="IntAct" id="Q14526">
    <property type="interactions" value="14"/>
</dbReference>
<dbReference type="MINT" id="Q14526"/>
<dbReference type="STRING" id="9606.ENSP00000314080"/>
<dbReference type="GlyGen" id="Q14526">
    <property type="glycosylation" value="1 site, 1 O-linked glycan (1 site)"/>
</dbReference>
<dbReference type="iPTMnet" id="Q14526"/>
<dbReference type="PhosphoSitePlus" id="Q14526"/>
<dbReference type="BioMuta" id="HIC1"/>
<dbReference type="DMDM" id="296439502"/>
<dbReference type="jPOST" id="Q14526"/>
<dbReference type="MassIVE" id="Q14526"/>
<dbReference type="PaxDb" id="9606-ENSP00000314080"/>
<dbReference type="PeptideAtlas" id="Q14526"/>
<dbReference type="ProteomicsDB" id="60028">
    <molecule id="Q14526-1"/>
</dbReference>
<dbReference type="ProteomicsDB" id="60029">
    <molecule id="Q14526-2"/>
</dbReference>
<dbReference type="TopDownProteomics" id="Q14526-1">
    <molecule id="Q14526-1"/>
</dbReference>
<dbReference type="Antibodypedia" id="5361">
    <property type="antibodies" value="280 antibodies from 31 providers"/>
</dbReference>
<dbReference type="DNASU" id="3090"/>
<dbReference type="Ensembl" id="ENST00000322941.3">
    <molecule id="Q14526-1"/>
    <property type="protein sequence ID" value="ENSP00000314080.3"/>
    <property type="gene ID" value="ENSG00000177374.13"/>
</dbReference>
<dbReference type="Ensembl" id="ENST00000399849.4">
    <molecule id="Q14526-2"/>
    <property type="protein sequence ID" value="ENSP00000382742.2"/>
    <property type="gene ID" value="ENSG00000177374.13"/>
</dbReference>
<dbReference type="Ensembl" id="ENST00000619757.5">
    <molecule id="Q14526-2"/>
    <property type="protein sequence ID" value="ENSP00000477858.1"/>
    <property type="gene ID" value="ENSG00000177374.13"/>
</dbReference>
<dbReference type="GeneID" id="3090"/>
<dbReference type="KEGG" id="hsa:3090"/>
<dbReference type="MANE-Select" id="ENST00000619757.5">
    <molecule id="Q14526-2"/>
    <property type="protein sequence ID" value="ENSP00000477858.1"/>
    <property type="RefSeq nucleotide sequence ID" value="NM_006497.4"/>
    <property type="RefSeq protein sequence ID" value="NP_006488.2"/>
</dbReference>
<dbReference type="UCSC" id="uc002fty.5">
    <molecule id="Q14526-1"/>
    <property type="organism name" value="human"/>
</dbReference>
<dbReference type="AGR" id="HGNC:4909"/>
<dbReference type="CTD" id="3090"/>
<dbReference type="DisGeNET" id="3090"/>
<dbReference type="GeneCards" id="HIC1"/>
<dbReference type="HGNC" id="HGNC:4909">
    <property type="gene designation" value="HIC1"/>
</dbReference>
<dbReference type="HPA" id="ENSG00000177374">
    <property type="expression patterns" value="Low tissue specificity"/>
</dbReference>
<dbReference type="MalaCards" id="HIC1"/>
<dbReference type="MIM" id="603825">
    <property type="type" value="gene"/>
</dbReference>
<dbReference type="neXtProt" id="NX_Q14526"/>
<dbReference type="OpenTargets" id="ENSG00000177374"/>
<dbReference type="Orphanet" id="531">
    <property type="disease" value="Miller-Dieker syndrome"/>
</dbReference>
<dbReference type="PharmGKB" id="PA29282"/>
<dbReference type="VEuPathDB" id="HostDB:ENSG00000177374"/>
<dbReference type="eggNOG" id="KOG1721">
    <property type="taxonomic scope" value="Eukaryota"/>
</dbReference>
<dbReference type="GeneTree" id="ENSGT00940000161725"/>
<dbReference type="HOGENOM" id="CLU_015352_1_0_1"/>
<dbReference type="InParanoid" id="Q14526"/>
<dbReference type="OrthoDB" id="8922241at2759"/>
<dbReference type="PAN-GO" id="Q14526">
    <property type="GO annotations" value="4 GO annotations based on evolutionary models"/>
</dbReference>
<dbReference type="PhylomeDB" id="Q14526"/>
<dbReference type="TreeFam" id="TF333488"/>
<dbReference type="PathwayCommons" id="Q14526"/>
<dbReference type="Reactome" id="R-HSA-3232118">
    <property type="pathway name" value="SUMOylation of transcription factors"/>
</dbReference>
<dbReference type="SignaLink" id="Q14526"/>
<dbReference type="SIGNOR" id="Q14526"/>
<dbReference type="BioGRID-ORCS" id="3090">
    <property type="hits" value="9 hits in 1204 CRISPR screens"/>
</dbReference>
<dbReference type="ChiTaRS" id="HIC1">
    <property type="organism name" value="human"/>
</dbReference>
<dbReference type="GeneWiki" id="HIC1"/>
<dbReference type="GenomeRNAi" id="3090"/>
<dbReference type="Pharos" id="Q14526">
    <property type="development level" value="Tbio"/>
</dbReference>
<dbReference type="PRO" id="PR:Q14526"/>
<dbReference type="Proteomes" id="UP000005640">
    <property type="component" value="Chromosome 17"/>
</dbReference>
<dbReference type="RNAct" id="Q14526">
    <property type="molecule type" value="protein"/>
</dbReference>
<dbReference type="Bgee" id="ENSG00000177374">
    <property type="expression patterns" value="Expressed in cardiac muscle of right atrium and 125 other cell types or tissues"/>
</dbReference>
<dbReference type="ExpressionAtlas" id="Q14526">
    <property type="expression patterns" value="baseline and differential"/>
</dbReference>
<dbReference type="GO" id="GO:0000785">
    <property type="term" value="C:chromatin"/>
    <property type="evidence" value="ECO:0000250"/>
    <property type="project" value="UniProtKB"/>
</dbReference>
<dbReference type="GO" id="GO:0005654">
    <property type="term" value="C:nucleoplasm"/>
    <property type="evidence" value="ECO:0000304"/>
    <property type="project" value="Reactome"/>
</dbReference>
<dbReference type="GO" id="GO:0005634">
    <property type="term" value="C:nucleus"/>
    <property type="evidence" value="ECO:0000318"/>
    <property type="project" value="GO_Central"/>
</dbReference>
<dbReference type="GO" id="GO:0003700">
    <property type="term" value="F:DNA-binding transcription factor activity"/>
    <property type="evidence" value="ECO:0000314"/>
    <property type="project" value="UniProtKB"/>
</dbReference>
<dbReference type="GO" id="GO:0000981">
    <property type="term" value="F:DNA-binding transcription factor activity, RNA polymerase II-specific"/>
    <property type="evidence" value="ECO:0000318"/>
    <property type="project" value="GO_Central"/>
</dbReference>
<dbReference type="GO" id="GO:0001227">
    <property type="term" value="F:DNA-binding transcription repressor activity, RNA polymerase II-specific"/>
    <property type="evidence" value="ECO:0000314"/>
    <property type="project" value="NTNU_SB"/>
</dbReference>
<dbReference type="GO" id="GO:0042826">
    <property type="term" value="F:histone deacetylase binding"/>
    <property type="evidence" value="ECO:0000314"/>
    <property type="project" value="UniProtKB"/>
</dbReference>
<dbReference type="GO" id="GO:0043565">
    <property type="term" value="F:sequence-specific DNA binding"/>
    <property type="evidence" value="ECO:0000314"/>
    <property type="project" value="UniProtKB"/>
</dbReference>
<dbReference type="GO" id="GO:1990837">
    <property type="term" value="F:sequence-specific double-stranded DNA binding"/>
    <property type="evidence" value="ECO:0000314"/>
    <property type="project" value="ARUK-UCL"/>
</dbReference>
<dbReference type="GO" id="GO:0008270">
    <property type="term" value="F:zinc ion binding"/>
    <property type="evidence" value="ECO:0007669"/>
    <property type="project" value="UniProtKB-KW"/>
</dbReference>
<dbReference type="GO" id="GO:0008630">
    <property type="term" value="P:intrinsic apoptotic signaling pathway in response to DNA damage"/>
    <property type="evidence" value="ECO:0000314"/>
    <property type="project" value="UniProtKB"/>
</dbReference>
<dbReference type="GO" id="GO:0000122">
    <property type="term" value="P:negative regulation of transcription by RNA polymerase II"/>
    <property type="evidence" value="ECO:0000314"/>
    <property type="project" value="UniProtKB"/>
</dbReference>
<dbReference type="GO" id="GO:0030178">
    <property type="term" value="P:negative regulation of Wnt signaling pathway"/>
    <property type="evidence" value="ECO:0000314"/>
    <property type="project" value="UniProtKB"/>
</dbReference>
<dbReference type="GO" id="GO:0043517">
    <property type="term" value="P:positive regulation of DNA damage response, signal transduction by p53 class mediator"/>
    <property type="evidence" value="ECO:0000250"/>
    <property type="project" value="UniProtKB"/>
</dbReference>
<dbReference type="GO" id="GO:0006355">
    <property type="term" value="P:regulation of DNA-templated transcription"/>
    <property type="evidence" value="ECO:0000304"/>
    <property type="project" value="UniProtKB"/>
</dbReference>
<dbReference type="GO" id="GO:0006357">
    <property type="term" value="P:regulation of transcription by RNA polymerase II"/>
    <property type="evidence" value="ECO:0000318"/>
    <property type="project" value="GO_Central"/>
</dbReference>
<dbReference type="GO" id="GO:0016055">
    <property type="term" value="P:Wnt signaling pathway"/>
    <property type="evidence" value="ECO:0007669"/>
    <property type="project" value="UniProtKB-KW"/>
</dbReference>
<dbReference type="FunFam" id="3.30.160.60:FF:000195">
    <property type="entry name" value="Hypermethylated in cancer 1 protein-like"/>
    <property type="match status" value="2"/>
</dbReference>
<dbReference type="FunFam" id="3.30.160.60:FF:000746">
    <property type="entry name" value="hypermethylated in cancer 2 protein-like"/>
    <property type="match status" value="1"/>
</dbReference>
<dbReference type="FunFam" id="3.30.710.10:FF:000032">
    <property type="entry name" value="hypermethylated in cancer 2 protein-like"/>
    <property type="match status" value="1"/>
</dbReference>
<dbReference type="FunFam" id="3.30.160.60:FF:001289">
    <property type="entry name" value="Zinc finger protein 574"/>
    <property type="match status" value="1"/>
</dbReference>
<dbReference type="Gene3D" id="3.30.160.60">
    <property type="entry name" value="Classic Zinc Finger"/>
    <property type="match status" value="4"/>
</dbReference>
<dbReference type="Gene3D" id="3.30.710.10">
    <property type="entry name" value="Potassium Channel Kv1.1, Chain A"/>
    <property type="match status" value="1"/>
</dbReference>
<dbReference type="InterPro" id="IPR000210">
    <property type="entry name" value="BTB/POZ_dom"/>
</dbReference>
<dbReference type="InterPro" id="IPR011333">
    <property type="entry name" value="SKP1/BTB/POZ_sf"/>
</dbReference>
<dbReference type="InterPro" id="IPR036236">
    <property type="entry name" value="Znf_C2H2_sf"/>
</dbReference>
<dbReference type="InterPro" id="IPR013087">
    <property type="entry name" value="Znf_C2H2_type"/>
</dbReference>
<dbReference type="PANTHER" id="PTHR24394:SF16">
    <property type="entry name" value="HYPERMETHYLATED IN CANCER 1 PROTEIN"/>
    <property type="match status" value="1"/>
</dbReference>
<dbReference type="PANTHER" id="PTHR24394">
    <property type="entry name" value="ZINC FINGER PROTEIN"/>
    <property type="match status" value="1"/>
</dbReference>
<dbReference type="Pfam" id="PF00651">
    <property type="entry name" value="BTB"/>
    <property type="match status" value="1"/>
</dbReference>
<dbReference type="Pfam" id="PF00096">
    <property type="entry name" value="zf-C2H2"/>
    <property type="match status" value="4"/>
</dbReference>
<dbReference type="SMART" id="SM00225">
    <property type="entry name" value="BTB"/>
    <property type="match status" value="1"/>
</dbReference>
<dbReference type="SMART" id="SM00355">
    <property type="entry name" value="ZnF_C2H2"/>
    <property type="match status" value="5"/>
</dbReference>
<dbReference type="SUPFAM" id="SSF57667">
    <property type="entry name" value="beta-beta-alpha zinc fingers"/>
    <property type="match status" value="3"/>
</dbReference>
<dbReference type="SUPFAM" id="SSF54695">
    <property type="entry name" value="POZ domain"/>
    <property type="match status" value="1"/>
</dbReference>
<dbReference type="PROSITE" id="PS50097">
    <property type="entry name" value="BTB"/>
    <property type="match status" value="1"/>
</dbReference>
<dbReference type="PROSITE" id="PS00028">
    <property type="entry name" value="ZINC_FINGER_C2H2_1"/>
    <property type="match status" value="5"/>
</dbReference>
<dbReference type="PROSITE" id="PS50157">
    <property type="entry name" value="ZINC_FINGER_C2H2_2"/>
    <property type="match status" value="5"/>
</dbReference>